<sequence>MENFPTEYFLNTSVRLLEYIRYRDSNYTREERIENLHYAYNKAAHHFAQPRQQQMLKVDPKRLQASLQTIVGMVVYSWAKVSKECMADLSIHYTYTLVLDDSSDDPHPAMLNYFDDLQAGREQAHPWWALVNEHFPNVLRHFGPFCSLNLIRSTMDFFEGCWIEQYNFGGFPGSDDYPQFLRRMNGLGHCVGASLWPKELFDERKNFLEITTAVAQMENWMVWVNDLMSFYKEFDDERDQISLVKNFVTCHEITLDEALEKLTQETLHSSKQMVAVFADKDPQVMDTIECFMHGYVTWHLCDARYRLHEIYKKVKDQDTEDAKKFCKFFEQAANVGAVAPSEWAYPQVAQLANVRAKGDVKEAQKPILSSIELVE</sequence>
<evidence type="ECO:0000305" key="1"/>
<accession>Q8NIH3</accession>
<gene>
    <name type="primary">TRI5</name>
</gene>
<proteinExistence type="inferred from homology"/>
<keyword id="KW-0456">Lyase</keyword>
<protein>
    <recommendedName>
        <fullName>Trichodiene synthase</fullName>
        <ecNumber>4.2.3.6</ecNumber>
    </recommendedName>
    <alternativeName>
        <fullName>Sesquiterpene cyclase</fullName>
        <shortName>TS</shortName>
    </alternativeName>
</protein>
<name>TRI5_FUSBO</name>
<comment type="function">
    <text>TS is a member of the terpene cyclase group of enzymes. It catalyzes the isomerization and cyclization of farnesyl pyro-phosphate to form trichodiene, the first cyclic intermediate in the biosynthetic pathway for trichothecenes. It serves to branch trichothecene biosynthesis from the isoprenoid pathway.</text>
</comment>
<comment type="catalytic activity">
    <reaction>
        <text>(2E,6E)-farnesyl diphosphate = trichodiene + diphosphate</text>
        <dbReference type="Rhea" id="RHEA:12052"/>
        <dbReference type="ChEBI" id="CHEBI:15861"/>
        <dbReference type="ChEBI" id="CHEBI:33019"/>
        <dbReference type="ChEBI" id="CHEBI:175763"/>
        <dbReference type="EC" id="4.2.3.6"/>
    </reaction>
</comment>
<comment type="pathway">
    <text>Sesquiterpene biosynthesis; trichothecene biosynthesis.</text>
</comment>
<comment type="miscellaneous">
    <text>Trichothecenes are sesquiterpenoid toxins that act by inhibiting protein biosynthesis.</text>
</comment>
<comment type="similarity">
    <text evidence="1">Belongs to the trichodiene synthase family.</text>
</comment>
<dbReference type="EC" id="4.2.3.6"/>
<dbReference type="EMBL" id="AY102579">
    <property type="protein sequence ID" value="AAM48846.1"/>
    <property type="molecule type" value="Genomic_DNA"/>
</dbReference>
<dbReference type="EMBL" id="AY102594">
    <property type="protein sequence ID" value="AAM48966.1"/>
    <property type="molecule type" value="Genomic_DNA"/>
</dbReference>
<dbReference type="EMBL" id="AY102595">
    <property type="protein sequence ID" value="AAM48974.1"/>
    <property type="molecule type" value="Genomic_DNA"/>
</dbReference>
<dbReference type="EMBL" id="AY102597">
    <property type="protein sequence ID" value="AAM48990.1"/>
    <property type="molecule type" value="Genomic_DNA"/>
</dbReference>
<dbReference type="SMR" id="Q8NIH3"/>
<dbReference type="UniPathway" id="UPA00267"/>
<dbReference type="GO" id="GO:0045482">
    <property type="term" value="F:trichodiene synthase activity"/>
    <property type="evidence" value="ECO:0007669"/>
    <property type="project" value="UniProtKB-EC"/>
</dbReference>
<dbReference type="GO" id="GO:0016106">
    <property type="term" value="P:sesquiterpenoid biosynthetic process"/>
    <property type="evidence" value="ECO:0007669"/>
    <property type="project" value="InterPro"/>
</dbReference>
<dbReference type="Gene3D" id="1.10.600.10">
    <property type="entry name" value="Farnesyl Diphosphate Synthase"/>
    <property type="match status" value="1"/>
</dbReference>
<dbReference type="InterPro" id="IPR008949">
    <property type="entry name" value="Isoprenoid_synthase_dom_sf"/>
</dbReference>
<dbReference type="InterPro" id="IPR010458">
    <property type="entry name" value="TRI5_ascomyc"/>
</dbReference>
<dbReference type="InterPro" id="IPR024652">
    <property type="entry name" value="Trichodiene_synth"/>
</dbReference>
<dbReference type="Pfam" id="PF06330">
    <property type="entry name" value="TRI5"/>
    <property type="match status" value="1"/>
</dbReference>
<dbReference type="PIRSF" id="PIRSF001388">
    <property type="entry name" value="TRI5"/>
    <property type="match status" value="1"/>
</dbReference>
<dbReference type="SFLD" id="SFLDS00005">
    <property type="entry name" value="Isoprenoid_Synthase_Type_I"/>
    <property type="match status" value="1"/>
</dbReference>
<dbReference type="SFLD" id="SFLDG01021">
    <property type="entry name" value="Trichodiene_Synthase_Like"/>
    <property type="match status" value="1"/>
</dbReference>
<dbReference type="SUPFAM" id="SSF48576">
    <property type="entry name" value="Terpenoid synthases"/>
    <property type="match status" value="1"/>
</dbReference>
<organism>
    <name type="scientific">Fusarium boothii</name>
    <dbReference type="NCBI Taxonomy" id="282271"/>
    <lineage>
        <taxon>Eukaryota</taxon>
        <taxon>Fungi</taxon>
        <taxon>Dikarya</taxon>
        <taxon>Ascomycota</taxon>
        <taxon>Pezizomycotina</taxon>
        <taxon>Sordariomycetes</taxon>
        <taxon>Hypocreomycetidae</taxon>
        <taxon>Hypocreales</taxon>
        <taxon>Nectriaceae</taxon>
        <taxon>Fusarium</taxon>
    </lineage>
</organism>
<reference key="1">
    <citation type="journal article" date="2002" name="Proc. Natl. Acad. Sci. U.S.A.">
        <title>Ancestral polymorphism and adaptive evolution in the trichothecene mycotoxin gene cluster of phytopathogenic Fusarium.</title>
        <authorList>
            <person name="Ward T.J."/>
            <person name="Bielawski J.P."/>
            <person name="Kistler H.C."/>
            <person name="Sullivan E."/>
            <person name="O'Donnell K."/>
        </authorList>
    </citation>
    <scope>NUCLEOTIDE SEQUENCE [GENOMIC DNA]</scope>
    <source>
        <strain>ATCC 24373 / CBS 316.73 / IMI 160243 / NRRL 26916</strain>
        <strain>CBS 110250 / FRC R-7775 / MRC 1118 1982 / NRRL 29020</strain>
        <strain>CBS 110251 / FRC-R-9434 / NRRL 29105</strain>
        <strain>CBS 110270 / FRC R-4782 / Marasas Sp 1031 / NRRL 29011</strain>
    </source>
</reference>
<feature type="chain" id="PRO_0000221576" description="Trichodiene synthase">
    <location>
        <begin position="1"/>
        <end position="375"/>
    </location>
</feature>